<accession>B0KCN3</accession>
<gene>
    <name evidence="1" type="primary">truA</name>
    <name type="ordered locus">Teth39_0407</name>
</gene>
<name>TRUA_THEP3</name>
<organism>
    <name type="scientific">Thermoanaerobacter pseudethanolicus (strain ATCC 33223 / 39E)</name>
    <name type="common">Clostridium thermohydrosulfuricum</name>
    <dbReference type="NCBI Taxonomy" id="340099"/>
    <lineage>
        <taxon>Bacteria</taxon>
        <taxon>Bacillati</taxon>
        <taxon>Bacillota</taxon>
        <taxon>Clostridia</taxon>
        <taxon>Thermoanaerobacterales</taxon>
        <taxon>Thermoanaerobacteraceae</taxon>
        <taxon>Thermoanaerobacter</taxon>
    </lineage>
</organism>
<protein>
    <recommendedName>
        <fullName evidence="1">tRNA pseudouridine synthase A</fullName>
        <ecNumber evidence="1">5.4.99.12</ecNumber>
    </recommendedName>
    <alternativeName>
        <fullName evidence="1">tRNA pseudouridine(38-40) synthase</fullName>
    </alternativeName>
    <alternativeName>
        <fullName evidence="1">tRNA pseudouridylate synthase I</fullName>
    </alternativeName>
    <alternativeName>
        <fullName evidence="1">tRNA-uridine isomerase I</fullName>
    </alternativeName>
</protein>
<proteinExistence type="inferred from homology"/>
<dbReference type="EC" id="5.4.99.12" evidence="1"/>
<dbReference type="EMBL" id="CP000924">
    <property type="protein sequence ID" value="ABY94076.1"/>
    <property type="molecule type" value="Genomic_DNA"/>
</dbReference>
<dbReference type="RefSeq" id="WP_003868592.1">
    <property type="nucleotide sequence ID" value="NC_010321.1"/>
</dbReference>
<dbReference type="SMR" id="B0KCN3"/>
<dbReference type="STRING" id="340099.Teth39_0407"/>
<dbReference type="KEGG" id="tpd:Teth39_0407"/>
<dbReference type="eggNOG" id="COG0101">
    <property type="taxonomic scope" value="Bacteria"/>
</dbReference>
<dbReference type="HOGENOM" id="CLU_014673_0_1_9"/>
<dbReference type="Proteomes" id="UP000002156">
    <property type="component" value="Chromosome"/>
</dbReference>
<dbReference type="GO" id="GO:0003723">
    <property type="term" value="F:RNA binding"/>
    <property type="evidence" value="ECO:0007669"/>
    <property type="project" value="InterPro"/>
</dbReference>
<dbReference type="GO" id="GO:0160147">
    <property type="term" value="F:tRNA pseudouridine(38-40) synthase activity"/>
    <property type="evidence" value="ECO:0007669"/>
    <property type="project" value="UniProtKB-EC"/>
</dbReference>
<dbReference type="GO" id="GO:0031119">
    <property type="term" value="P:tRNA pseudouridine synthesis"/>
    <property type="evidence" value="ECO:0007669"/>
    <property type="project" value="UniProtKB-UniRule"/>
</dbReference>
<dbReference type="CDD" id="cd02570">
    <property type="entry name" value="PseudoU_synth_EcTruA"/>
    <property type="match status" value="1"/>
</dbReference>
<dbReference type="FunFam" id="3.30.70.580:FF:000001">
    <property type="entry name" value="tRNA pseudouridine synthase A"/>
    <property type="match status" value="1"/>
</dbReference>
<dbReference type="Gene3D" id="3.30.70.660">
    <property type="entry name" value="Pseudouridine synthase I, catalytic domain, C-terminal subdomain"/>
    <property type="match status" value="1"/>
</dbReference>
<dbReference type="Gene3D" id="3.30.70.580">
    <property type="entry name" value="Pseudouridine synthase I, catalytic domain, N-terminal subdomain"/>
    <property type="match status" value="1"/>
</dbReference>
<dbReference type="HAMAP" id="MF_00171">
    <property type="entry name" value="TruA"/>
    <property type="match status" value="1"/>
</dbReference>
<dbReference type="InterPro" id="IPR020103">
    <property type="entry name" value="PsdUridine_synth_cat_dom_sf"/>
</dbReference>
<dbReference type="InterPro" id="IPR001406">
    <property type="entry name" value="PsdUridine_synth_TruA"/>
</dbReference>
<dbReference type="InterPro" id="IPR020097">
    <property type="entry name" value="PsdUridine_synth_TruA_a/b_dom"/>
</dbReference>
<dbReference type="InterPro" id="IPR020095">
    <property type="entry name" value="PsdUridine_synth_TruA_C"/>
</dbReference>
<dbReference type="InterPro" id="IPR020094">
    <property type="entry name" value="TruA/RsuA/RluB/E/F_N"/>
</dbReference>
<dbReference type="NCBIfam" id="TIGR00071">
    <property type="entry name" value="hisT_truA"/>
    <property type="match status" value="1"/>
</dbReference>
<dbReference type="PANTHER" id="PTHR11142">
    <property type="entry name" value="PSEUDOURIDYLATE SYNTHASE"/>
    <property type="match status" value="1"/>
</dbReference>
<dbReference type="PANTHER" id="PTHR11142:SF0">
    <property type="entry name" value="TRNA PSEUDOURIDINE SYNTHASE-LIKE 1"/>
    <property type="match status" value="1"/>
</dbReference>
<dbReference type="Pfam" id="PF01416">
    <property type="entry name" value="PseudoU_synth_1"/>
    <property type="match status" value="2"/>
</dbReference>
<dbReference type="PIRSF" id="PIRSF001430">
    <property type="entry name" value="tRNA_psdUrid_synth"/>
    <property type="match status" value="1"/>
</dbReference>
<dbReference type="SUPFAM" id="SSF55120">
    <property type="entry name" value="Pseudouridine synthase"/>
    <property type="match status" value="1"/>
</dbReference>
<keyword id="KW-0413">Isomerase</keyword>
<keyword id="KW-1185">Reference proteome</keyword>
<keyword id="KW-0819">tRNA processing</keyword>
<comment type="function">
    <text evidence="1">Formation of pseudouridine at positions 38, 39 and 40 in the anticodon stem and loop of transfer RNAs.</text>
</comment>
<comment type="catalytic activity">
    <reaction evidence="1">
        <text>uridine(38/39/40) in tRNA = pseudouridine(38/39/40) in tRNA</text>
        <dbReference type="Rhea" id="RHEA:22376"/>
        <dbReference type="Rhea" id="RHEA-COMP:10085"/>
        <dbReference type="Rhea" id="RHEA-COMP:10087"/>
        <dbReference type="ChEBI" id="CHEBI:65314"/>
        <dbReference type="ChEBI" id="CHEBI:65315"/>
        <dbReference type="EC" id="5.4.99.12"/>
    </reaction>
</comment>
<comment type="subunit">
    <text evidence="1">Homodimer.</text>
</comment>
<comment type="similarity">
    <text evidence="1">Belongs to the tRNA pseudouridine synthase TruA family.</text>
</comment>
<evidence type="ECO:0000255" key="1">
    <source>
        <dbReference type="HAMAP-Rule" id="MF_00171"/>
    </source>
</evidence>
<feature type="chain" id="PRO_1000097798" description="tRNA pseudouridine synthase A">
    <location>
        <begin position="1"/>
        <end position="244"/>
    </location>
</feature>
<feature type="active site" description="Nucleophile" evidence="1">
    <location>
        <position position="52"/>
    </location>
</feature>
<feature type="binding site" evidence="1">
    <location>
        <position position="110"/>
    </location>
    <ligand>
        <name>substrate</name>
    </ligand>
</feature>
<sequence length="244" mass="27867">MRNVMIVVEYDGTNYHGWQYQKNAVTVQEVLQKAIKKVTGEEVNLIGASRTDTGVHALYQVANFKTNTKIPAEKLPYALNSVLPDDIVVVQAKDVEDSFHARYSAKRKRYKYIILNRKFQMPTMRNYCWHISYPLNIEEMKKAASYLIGTHDFSAFKASGSSKTSTIRTVYDLTIEKNEDFINIEIEANGFLYNMVRIIVGTLSYVGLGKIKEDEVYDILKSKDRTKAGITAPPQGLYLIKIIY</sequence>
<reference key="1">
    <citation type="submission" date="2008-01" db="EMBL/GenBank/DDBJ databases">
        <title>Complete sequence of Thermoanaerobacter pseudethanolicus 39E.</title>
        <authorList>
            <person name="Copeland A."/>
            <person name="Lucas S."/>
            <person name="Lapidus A."/>
            <person name="Barry K."/>
            <person name="Glavina del Rio T."/>
            <person name="Dalin E."/>
            <person name="Tice H."/>
            <person name="Pitluck S."/>
            <person name="Bruce D."/>
            <person name="Goodwin L."/>
            <person name="Saunders E."/>
            <person name="Brettin T."/>
            <person name="Detter J.C."/>
            <person name="Han C."/>
            <person name="Schmutz J."/>
            <person name="Larimer F."/>
            <person name="Land M."/>
            <person name="Hauser L."/>
            <person name="Kyrpides N."/>
            <person name="Lykidis A."/>
            <person name="Hemme C."/>
            <person name="Fields M.W."/>
            <person name="He Z."/>
            <person name="Zhou J."/>
            <person name="Richardson P."/>
        </authorList>
    </citation>
    <scope>NUCLEOTIDE SEQUENCE [LARGE SCALE GENOMIC DNA]</scope>
    <source>
        <strain>ATCC 33223 / DSM 2355 / 39E</strain>
    </source>
</reference>